<name>AKAP5_MOUSE</name>
<comment type="function">
    <text evidence="3 6">Multivalent scaffold protein that anchors the cAMP-dependent protein kinase/PKA to cytoskeletal and/or organelle-associated proteins, targeting the signal carried by cAMP to specific intracellular effectors. Association with the beta2-adrenergic receptor (beta2-AR) not only regulates beta2-AR signaling pathway, but also the activation by PKA by switching off the beta2-AR signaling cascade. Plays a role in long term synaptic potentiation by regulating protein trafficking from the dendritic recycling endosomes to the plasma membrane and controlling both structural and functional plasticity at excitatory synapses (By similarity). In hippocampal pyramidal neurons, recruits KCNK2/TREK-1 channel at postsynaptic dense bodies microdomains and converts it to a leak channel no longer sensitive to stimulation by arachidonic acid, acidic pH or mechanical stress, nor inhibited by Gq-coupled receptors but still under the negative control of Gs-coupled receptors (PubMed:17110924). Associates with ORAI1 pore-forming subunit of CRAC channels in Ca(2+) signaling microdomains where it recruits NFATC2/NFAT1 and couples store-operated Ca(2+) influx to calmodulin and calcineurin signaling and activation of NFAT-dependent transcriptional responses.</text>
</comment>
<comment type="subunit">
    <text evidence="1 2 3 6">Binding protein for dimer of the RII-beta regulatory subunit of cAMP-dependent protein kinase (PKA) and also for the protein kinase C (PKC) and the phosphatase calcineurin (PP2B). Each enzyme is inhibited when bound to the anchoring protein. Also binds the beta2-adrenergic receptor. Part of a complex containing AKAP5, ADCY5, ADCY6 and PDE4C (By similarity). Interacts with ADCY8, and enhances its phosphorylation at lipid rafts (By similarity). Interacts with ORAI1 (isoform alpha) (via N-terminus) upon store depletion and in response to LTC4. Does not interact with ORAI2 and ORAI3 paralogs. Interacts (via leucine zipper domain) with NFATC2/NFAT1 (By similarity). Interacts with calmodulin; the interaction is calcium-independent (By similarity). Interacts with KCNQ2; the interaction may help KCNQ2 channel complex to retain calcium-bound calmodulin (By similarity). Interacts with KCNK2; the channel is recruited to postsynaptic microdomains by AKAP5 where it can integrate neurotransmitter receptor signals. Part of a complex composed of AKAP5 and ADRB2.</text>
</comment>
<comment type="interaction">
    <interactant intactId="EBI-7091108">
        <id>D3YVF0</id>
    </interactant>
    <interactant intactId="EBI-7091062">
        <id>P97438</id>
        <label>Kcnk2</label>
    </interactant>
    <organismsDiffer>false</organismsDiffer>
    <experiments>4</experiments>
</comment>
<comment type="interaction">
    <interactant intactId="EBI-7091108">
        <id>D3YVF0</id>
    </interactant>
    <interactant intactId="EBI-642618">
        <id>P48453</id>
        <label>Ppp3cb</label>
    </interactant>
    <organismsDiffer>false</organismsDiffer>
    <experiments>3</experiments>
</comment>
<comment type="interaction">
    <interactant intactId="EBI-7091108">
        <id>D3YVF0</id>
    </interactant>
    <interactant intactId="EBI-645747">
        <id>P12367</id>
        <label>Prkar2a</label>
    </interactant>
    <organismsDiffer>false</organismsDiffer>
    <experiments>2</experiments>
</comment>
<comment type="subcellular location">
    <subcellularLocation>
        <location evidence="3">Postsynaptic recycling endosome membrane</location>
        <topology evidence="3">Lipid-anchor</topology>
    </subcellularLocation>
    <subcellularLocation>
        <location evidence="6">Cell projection</location>
        <location evidence="6">Dendrite</location>
    </subcellularLocation>
    <subcellularLocation>
        <location evidence="7">Postsynaptic cell membrane</location>
        <topology evidence="3">Lipid-anchor</topology>
    </subcellularLocation>
    <text evidence="3">Associates with lipid rafts.</text>
</comment>
<comment type="domain">
    <text evidence="3">RII-alpha binding site, predicted to form an amphipathic helix, could participate in protein-protein interactions with a complementary surface on the R-subunit dimer.</text>
</comment>
<comment type="domain">
    <text evidence="3">The N-terminal region, which is highly basic, is required for interaction with calmodulin.</text>
</comment>
<comment type="PTM">
    <text evidence="3">Palmitoylated. Palmitoylation at Cys-36 and Cys-123 play a key role in the targeting of AKAP5 to lipid rafts. Palmitoylation by ZDHHC2 is required for AKAP5 function in LTP-stimulated recycling endosome exocytosis.</text>
</comment>
<dbReference type="EMBL" id="AC120002">
    <property type="status" value="NOT_ANNOTATED_CDS"/>
    <property type="molecule type" value="Genomic_DNA"/>
</dbReference>
<dbReference type="CCDS" id="CCDS49092.1"/>
<dbReference type="RefSeq" id="NP_001094941.1">
    <property type="nucleotide sequence ID" value="NM_001101471.1"/>
</dbReference>
<dbReference type="BioGRID" id="231964">
    <property type="interactions" value="7"/>
</dbReference>
<dbReference type="ComplexPortal" id="CPX-1006">
    <property type="entry name" value="Calcineurin-Calmodulin-AKAP5 complex, beta-R1 variant"/>
</dbReference>
<dbReference type="ComplexPortal" id="CPX-1113">
    <property type="entry name" value="Calcineurin-Calmodulin-AKAP5 complex, gamma-R1 variant"/>
</dbReference>
<dbReference type="ComplexPortal" id="CPX-1115">
    <property type="entry name" value="Calcineurin-Calmodulin-AKAP5 complex, alpha-R2 variant"/>
</dbReference>
<dbReference type="ComplexPortal" id="CPX-1117">
    <property type="entry name" value="Calcineurin-Calmodulin-AKAP5 complex, beta-R2 variant"/>
</dbReference>
<dbReference type="ComplexPortal" id="CPX-1119">
    <property type="entry name" value="Calcineurin-Calmodulin-AKAP5 complex, gamma-R2 variant"/>
</dbReference>
<dbReference type="ComplexPortal" id="CPX-881">
    <property type="entry name" value="Calcineurin-Calmodulin-AKAP5 complex, alpha-R1 variant"/>
</dbReference>
<dbReference type="CORUM" id="D3YVF0"/>
<dbReference type="FunCoup" id="D3YVF0">
    <property type="interactions" value="192"/>
</dbReference>
<dbReference type="IntAct" id="D3YVF0">
    <property type="interactions" value="4"/>
</dbReference>
<dbReference type="MINT" id="D3YVF0"/>
<dbReference type="STRING" id="10090.ENSMUSP00000114495"/>
<dbReference type="GlyGen" id="D3YVF0">
    <property type="glycosylation" value="1 site, 1 O-linked glycan (1 site)"/>
</dbReference>
<dbReference type="iPTMnet" id="D3YVF0"/>
<dbReference type="PhosphoSitePlus" id="D3YVF0"/>
<dbReference type="SwissPalm" id="D3YVF0"/>
<dbReference type="PaxDb" id="10090-ENSMUSP00000093270"/>
<dbReference type="PeptideAtlas" id="D3YVF0"/>
<dbReference type="ProteomicsDB" id="282059"/>
<dbReference type="Antibodypedia" id="3806">
    <property type="antibodies" value="257 antibodies from 31 providers"/>
</dbReference>
<dbReference type="DNASU" id="238276"/>
<dbReference type="Ensembl" id="ENSMUST00000154078.3">
    <property type="protein sequence ID" value="ENSMUSP00000114495.3"/>
    <property type="gene ID" value="ENSMUSG00000021057.16"/>
</dbReference>
<dbReference type="GeneID" id="238276"/>
<dbReference type="KEGG" id="mmu:238276"/>
<dbReference type="UCSC" id="uc007nya.2">
    <property type="organism name" value="mouse"/>
</dbReference>
<dbReference type="AGR" id="MGI:2685104"/>
<dbReference type="CTD" id="9495"/>
<dbReference type="MGI" id="MGI:2685104">
    <property type="gene designation" value="Akap5"/>
</dbReference>
<dbReference type="VEuPathDB" id="HostDB:ENSMUSG00000021057"/>
<dbReference type="eggNOG" id="ENOG502S1NI">
    <property type="taxonomic scope" value="Eukaryota"/>
</dbReference>
<dbReference type="GeneTree" id="ENSGT00390000019941"/>
<dbReference type="HOGENOM" id="CLU_372953_0_0_1"/>
<dbReference type="InParanoid" id="D3YVF0"/>
<dbReference type="OMA" id="ESTTHAF"/>
<dbReference type="OrthoDB" id="9905114at2759"/>
<dbReference type="PhylomeDB" id="D3YVF0"/>
<dbReference type="Reactome" id="R-MMU-399719">
    <property type="pathway name" value="Trafficking of AMPA receptors"/>
</dbReference>
<dbReference type="BioGRID-ORCS" id="238276">
    <property type="hits" value="1 hit in 77 CRISPR screens"/>
</dbReference>
<dbReference type="CD-CODE" id="CE726F99">
    <property type="entry name" value="Postsynaptic density"/>
</dbReference>
<dbReference type="PRO" id="PR:D3YVF0"/>
<dbReference type="Proteomes" id="UP000000589">
    <property type="component" value="Chromosome 12"/>
</dbReference>
<dbReference type="RNAct" id="D3YVF0">
    <property type="molecule type" value="protein"/>
</dbReference>
<dbReference type="Bgee" id="ENSMUSG00000021057">
    <property type="expression patterns" value="Expressed in left lung lobe and 178 other cell types or tissues"/>
</dbReference>
<dbReference type="ExpressionAtlas" id="D3YVF0">
    <property type="expression patterns" value="baseline and differential"/>
</dbReference>
<dbReference type="GO" id="GO:0005856">
    <property type="term" value="C:cytoskeleton"/>
    <property type="evidence" value="ECO:0000314"/>
    <property type="project" value="MGI"/>
</dbReference>
<dbReference type="GO" id="GO:0005829">
    <property type="term" value="C:cytosol"/>
    <property type="evidence" value="ECO:0000303"/>
    <property type="project" value="ComplexPortal"/>
</dbReference>
<dbReference type="GO" id="GO:0030425">
    <property type="term" value="C:dendrite"/>
    <property type="evidence" value="ECO:0000314"/>
    <property type="project" value="UniProtKB"/>
</dbReference>
<dbReference type="GO" id="GO:0045121">
    <property type="term" value="C:membrane raft"/>
    <property type="evidence" value="ECO:0000250"/>
    <property type="project" value="UniProtKB"/>
</dbReference>
<dbReference type="GO" id="GO:0005886">
    <property type="term" value="C:plasma membrane"/>
    <property type="evidence" value="ECO:0000314"/>
    <property type="project" value="MGI"/>
</dbReference>
<dbReference type="GO" id="GO:0045211">
    <property type="term" value="C:postsynaptic membrane"/>
    <property type="evidence" value="ECO:0007669"/>
    <property type="project" value="UniProtKB-SubCell"/>
</dbReference>
<dbReference type="GO" id="GO:0098837">
    <property type="term" value="C:postsynaptic recycling endosome"/>
    <property type="evidence" value="ECO:0000314"/>
    <property type="project" value="UniProt"/>
</dbReference>
<dbReference type="GO" id="GO:0098944">
    <property type="term" value="C:postsynaptic recycling endosome membrane"/>
    <property type="evidence" value="ECO:0007669"/>
    <property type="project" value="UniProtKB-SubCell"/>
</dbReference>
<dbReference type="GO" id="GO:0008287">
    <property type="term" value="C:protein serine/threonine phosphatase complex"/>
    <property type="evidence" value="ECO:0000303"/>
    <property type="project" value="ComplexPortal"/>
</dbReference>
<dbReference type="GO" id="GO:0008179">
    <property type="term" value="F:adenylate cyclase binding"/>
    <property type="evidence" value="ECO:0000353"/>
    <property type="project" value="MGI"/>
</dbReference>
<dbReference type="GO" id="GO:0005516">
    <property type="term" value="F:calmodulin binding"/>
    <property type="evidence" value="ECO:0007669"/>
    <property type="project" value="UniProtKB-KW"/>
</dbReference>
<dbReference type="GO" id="GO:0060090">
    <property type="term" value="F:molecular adaptor activity"/>
    <property type="evidence" value="ECO:0000314"/>
    <property type="project" value="UniProt"/>
</dbReference>
<dbReference type="GO" id="GO:0034237">
    <property type="term" value="F:protein kinase A regulatory subunit binding"/>
    <property type="evidence" value="ECO:0000266"/>
    <property type="project" value="MGI"/>
</dbReference>
<dbReference type="GO" id="GO:0036394">
    <property type="term" value="P:amylase secretion"/>
    <property type="evidence" value="ECO:0000315"/>
    <property type="project" value="MGI"/>
</dbReference>
<dbReference type="GO" id="GO:0071277">
    <property type="term" value="P:cellular response to calcium ion"/>
    <property type="evidence" value="ECO:0000315"/>
    <property type="project" value="MGI"/>
</dbReference>
<dbReference type="GO" id="GO:0071466">
    <property type="term" value="P:cellular response to xenobiotic stimulus"/>
    <property type="evidence" value="ECO:0000315"/>
    <property type="project" value="MGI"/>
</dbReference>
<dbReference type="GO" id="GO:0070073">
    <property type="term" value="P:clustering of voltage-gated calcium channels"/>
    <property type="evidence" value="ECO:0000315"/>
    <property type="project" value="CACAO"/>
</dbReference>
<dbReference type="GO" id="GO:0045163">
    <property type="term" value="P:clustering of voltage-gated potassium channels"/>
    <property type="evidence" value="ECO:0000314"/>
    <property type="project" value="CACAO"/>
</dbReference>
<dbReference type="GO" id="GO:0051649">
    <property type="term" value="P:establishment of localization in cell"/>
    <property type="evidence" value="ECO:0000315"/>
    <property type="project" value="MGI"/>
</dbReference>
<dbReference type="GO" id="GO:0010467">
    <property type="term" value="P:gene expression"/>
    <property type="evidence" value="ECO:0000315"/>
    <property type="project" value="MGI"/>
</dbReference>
<dbReference type="GO" id="GO:0007194">
    <property type="term" value="P:negative regulation of adenylate cyclase activity"/>
    <property type="evidence" value="ECO:0000250"/>
    <property type="project" value="UniProtKB"/>
</dbReference>
<dbReference type="GO" id="GO:0070886">
    <property type="term" value="P:positive regulation of calcineurin-NFAT signaling cascade"/>
    <property type="evidence" value="ECO:0000303"/>
    <property type="project" value="ComplexPortal"/>
</dbReference>
<dbReference type="GO" id="GO:1905665">
    <property type="term" value="P:positive regulation of calcium ion import across plasma membrane"/>
    <property type="evidence" value="ECO:0000303"/>
    <property type="project" value="ComplexPortal"/>
</dbReference>
<dbReference type="GO" id="GO:0099630">
    <property type="term" value="P:postsynaptic neurotransmitter receptor cycle"/>
    <property type="evidence" value="ECO:0000315"/>
    <property type="project" value="UniProt"/>
</dbReference>
<dbReference type="GO" id="GO:0043113">
    <property type="term" value="P:receptor clustering"/>
    <property type="evidence" value="ECO:0000314"/>
    <property type="project" value="CACAO"/>
</dbReference>
<dbReference type="GO" id="GO:0007416">
    <property type="term" value="P:synapse assembly"/>
    <property type="evidence" value="ECO:0000315"/>
    <property type="project" value="UniProt"/>
</dbReference>
<dbReference type="InterPro" id="IPR042375">
    <property type="entry name" value="AKAP5"/>
</dbReference>
<dbReference type="InterPro" id="IPR001573">
    <property type="entry name" value="AKAP_WSK"/>
</dbReference>
<dbReference type="PANTHER" id="PTHR15182:SF0">
    <property type="entry name" value="A-KINASE ANCHOR PROTEIN 5"/>
    <property type="match status" value="1"/>
</dbReference>
<dbReference type="PANTHER" id="PTHR15182">
    <property type="entry name" value="A-KINASE ANCHOR PROTEIN 5-RELATED"/>
    <property type="match status" value="1"/>
</dbReference>
<dbReference type="Pfam" id="PF03832">
    <property type="entry name" value="WSK"/>
    <property type="match status" value="1"/>
</dbReference>
<dbReference type="SUPFAM" id="SSF69349">
    <property type="entry name" value="Phage fibre proteins"/>
    <property type="match status" value="2"/>
</dbReference>
<dbReference type="PROSITE" id="PS51893">
    <property type="entry name" value="AKAP_CAM_BD"/>
    <property type="match status" value="1"/>
</dbReference>
<evidence type="ECO:0000250" key="1"/>
<evidence type="ECO:0000250" key="2">
    <source>
        <dbReference type="UniProtKB" id="P24587"/>
    </source>
</evidence>
<evidence type="ECO:0000250" key="3">
    <source>
        <dbReference type="UniProtKB" id="P24588"/>
    </source>
</evidence>
<evidence type="ECO:0000255" key="4">
    <source>
        <dbReference type="PROSITE-ProRule" id="PRU01241"/>
    </source>
</evidence>
<evidence type="ECO:0000256" key="5">
    <source>
        <dbReference type="SAM" id="MobiDB-lite"/>
    </source>
</evidence>
<evidence type="ECO:0000269" key="6">
    <source>
    </source>
</evidence>
<evidence type="ECO:0000305" key="7">
    <source>
    </source>
</evidence>
<evidence type="ECO:0007744" key="8">
    <source>
    </source>
</evidence>
<accession>D3YVF0</accession>
<accession>D3Z5C9</accession>
<protein>
    <recommendedName>
        <fullName>A-kinase anchor protein 5</fullName>
        <shortName>AKAP-5</shortName>
    </recommendedName>
    <alternativeName>
        <fullName>A-kinase anchor protein 150 kDa</fullName>
        <shortName>AKAP 150</shortName>
        <shortName>P150</shortName>
    </alternativeName>
    <alternativeName>
        <fullName>cAMP-dependent protein kinase regulatory subunit II high affinity-binding protein</fullName>
    </alternativeName>
</protein>
<organism>
    <name type="scientific">Mus musculus</name>
    <name type="common">Mouse</name>
    <dbReference type="NCBI Taxonomy" id="10090"/>
    <lineage>
        <taxon>Eukaryota</taxon>
        <taxon>Metazoa</taxon>
        <taxon>Chordata</taxon>
        <taxon>Craniata</taxon>
        <taxon>Vertebrata</taxon>
        <taxon>Euteleostomi</taxon>
        <taxon>Mammalia</taxon>
        <taxon>Eutheria</taxon>
        <taxon>Euarchontoglires</taxon>
        <taxon>Glires</taxon>
        <taxon>Rodentia</taxon>
        <taxon>Myomorpha</taxon>
        <taxon>Muroidea</taxon>
        <taxon>Muridae</taxon>
        <taxon>Murinae</taxon>
        <taxon>Mus</taxon>
        <taxon>Mus</taxon>
    </lineage>
</organism>
<sequence length="745" mass="79397">METSVSEIQVETKDEKGPVAASPQKERQERKTATLCFKRRKKANKTKPKAGSRTAEETKKHTPEAGGSGQRQPAGAWASIKGLVTHRKRSEPAKKQKPPEAEVQPEDGALPKKKAKSRLKFPCLRFSRGAKRSRHSKLTEDSGYVRVQGEADDLEIKAQTQPDDQAIQAGSTQGLQEGVLVRDGKKSQESHISNSVTSGENVIAIELELENKSSAIQMGTPELEKETKVITEKPSVQTQRASLLESSAAGSPRSVTSAAPPSPATTHQHSLEEPSNGIRESAPSGKDDRRKTAAEEKKSGETALGQAEEAAVGQADKRALSQAGEATAGHPEEATVIQAESQAKEGKLSQAEETTVAQAKETVLSQAKEGELSQAKKATVGQAEEATIDHTEKVTVDQAEETTVGQAEEATVGQAGEAILSQAKEATVVGQAEEATVDRAEEATVGQAEEATVGHTEKVTVDQAEEATVGQAEEATVGQAEEATVDWAEKPTVGQAEEATVGQAEEATVGHTEKVTVDQAEEATVGQAEEATVGHTEKVTVDHAEEATVGQAEEATVGQAEKVTVDHAEEATVGQAEEATVGQAEKVTVDHAEEATVGQAEEATVGQAEKVTVDQAEEPTVDQAEEAISSHAPDLKENGIDTEKPRSEESKRMEPIAIIITDTEISEFDVKKSKNVPKQFLISMENEQVGVFANDSDFEGRTSEQYETLLIETASSLVKNAIELSVEQLVNEMVSEDNQINTLFQ</sequence>
<gene>
    <name type="primary">Akap5</name>
    <name type="synonym">Akap150</name>
</gene>
<proteinExistence type="evidence at protein level"/>
<keyword id="KW-0112">Calmodulin-binding</keyword>
<keyword id="KW-1003">Cell membrane</keyword>
<keyword id="KW-0966">Cell projection</keyword>
<keyword id="KW-0967">Endosome</keyword>
<keyword id="KW-0449">Lipoprotein</keyword>
<keyword id="KW-0472">Membrane</keyword>
<keyword id="KW-0564">Palmitate</keyword>
<keyword id="KW-0597">Phosphoprotein</keyword>
<keyword id="KW-0628">Postsynaptic cell membrane</keyword>
<keyword id="KW-1185">Reference proteome</keyword>
<keyword id="KW-0677">Repeat</keyword>
<keyword id="KW-0770">Synapse</keyword>
<feature type="chain" id="PRO_0000414750" description="A-kinase anchor protein 5">
    <location>
        <begin position="1"/>
        <end position="745"/>
    </location>
</feature>
<feature type="repeat" description="1; approximate">
    <location>
        <begin position="304"/>
        <end position="312"/>
    </location>
</feature>
<feature type="repeat" description="2; approximate">
    <location>
        <begin position="320"/>
        <end position="327"/>
    </location>
</feature>
<feature type="repeat" description="3; approximate">
    <location>
        <begin position="328"/>
        <end position="335"/>
    </location>
</feature>
<feature type="repeat" description="4; approximate">
    <location>
        <begin position="348"/>
        <end position="355"/>
    </location>
</feature>
<feature type="repeat" description="5; approximate">
    <location>
        <begin position="356"/>
        <end position="363"/>
    </location>
</feature>
<feature type="repeat" description="6; approximate">
    <location>
        <begin position="364"/>
        <end position="395"/>
    </location>
</feature>
<feature type="repeat" description="7; approximate">
    <location>
        <begin position="420"/>
        <end position="436"/>
    </location>
</feature>
<feature type="repeat" description="8; approximate">
    <location>
        <begin position="445"/>
        <end position="452"/>
    </location>
</feature>
<feature type="repeat" description="9">
    <location>
        <begin position="461"/>
        <end position="468"/>
    </location>
</feature>
<feature type="repeat" description="10">
    <location>
        <begin position="469"/>
        <end position="476"/>
    </location>
</feature>
<feature type="repeat" description="11">
    <location>
        <begin position="477"/>
        <end position="484"/>
    </location>
</feature>
<feature type="repeat" description="12">
    <location>
        <begin position="485"/>
        <end position="492"/>
    </location>
</feature>
<feature type="repeat" description="13">
    <location>
        <begin position="493"/>
        <end position="500"/>
    </location>
</feature>
<feature type="repeat" description="14; approximate">
    <location>
        <begin position="501"/>
        <end position="508"/>
    </location>
</feature>
<feature type="repeat" description="15; approximate">
    <location>
        <begin position="517"/>
        <end position="524"/>
    </location>
</feature>
<feature type="repeat" description="16">
    <location>
        <begin position="525"/>
        <end position="532"/>
    </location>
</feature>
<feature type="repeat" description="17">
    <location>
        <begin position="533"/>
        <end position="540"/>
    </location>
</feature>
<feature type="repeat" description="18">
    <location>
        <begin position="541"/>
        <end position="548"/>
    </location>
</feature>
<feature type="repeat" description="19">
    <location>
        <begin position="549"/>
        <end position="556"/>
    </location>
</feature>
<feature type="repeat" description="20; approximate">
    <location>
        <begin position="557"/>
        <end position="564"/>
    </location>
</feature>
<feature type="repeat" description="21">
    <location>
        <begin position="565"/>
        <end position="572"/>
    </location>
</feature>
<feature type="repeat" description="22; approximate">
    <location>
        <begin position="573"/>
        <end position="580"/>
    </location>
</feature>
<feature type="repeat" description="23; approximate">
    <location>
        <begin position="581"/>
        <end position="588"/>
    </location>
</feature>
<feature type="repeat" description="24; approximate">
    <location>
        <begin position="589"/>
        <end position="596"/>
    </location>
</feature>
<feature type="repeat" description="25">
    <location>
        <begin position="597"/>
        <end position="604"/>
    </location>
</feature>
<feature type="repeat" description="26; approximate">
    <location>
        <begin position="605"/>
        <end position="612"/>
    </location>
</feature>
<feature type="repeat" description="27; approximate">
    <location>
        <begin position="613"/>
        <end position="620"/>
    </location>
</feature>
<feature type="repeat" description="28; approximate">
    <location>
        <begin position="621"/>
        <end position="628"/>
    </location>
</feature>
<feature type="region of interest" description="Essential to the intracellular anchoring function" evidence="1">
    <location>
        <begin position="1"/>
        <end position="164"/>
    </location>
</feature>
<feature type="region of interest" description="Disordered" evidence="5">
    <location>
        <begin position="1"/>
        <end position="121"/>
    </location>
</feature>
<feature type="region of interest" description="Disordered" evidence="5">
    <location>
        <begin position="162"/>
        <end position="195"/>
    </location>
</feature>
<feature type="region of interest" description="Disordered" evidence="5">
    <location>
        <begin position="215"/>
        <end position="392"/>
    </location>
</feature>
<feature type="region of interest" description="28 X 8 AA repeats of V-G-Q-A-E-E-A-T">
    <location>
        <begin position="304"/>
        <end position="628"/>
    </location>
</feature>
<feature type="region of interest" description="Disordered" evidence="5">
    <location>
        <begin position="466"/>
        <end position="560"/>
    </location>
</feature>
<feature type="region of interest" description="Disordered" evidence="5">
    <location>
        <begin position="617"/>
        <end position="651"/>
    </location>
</feature>
<feature type="region of interest" description="RII-beta subunit binding domain" evidence="1">
    <location>
        <begin position="706"/>
        <end position="727"/>
    </location>
</feature>
<feature type="region of interest" description="Tethers NFATC2 to CRAC channels" evidence="3">
    <location>
        <begin position="728"/>
        <end position="745"/>
    </location>
</feature>
<feature type="short sequence motif" description="AKAP CaM-binding" evidence="4">
    <location>
        <begin position="74"/>
        <end position="94"/>
    </location>
</feature>
<feature type="compositionally biased region" description="Basic residues" evidence="5">
    <location>
        <begin position="37"/>
        <end position="50"/>
    </location>
</feature>
<feature type="compositionally biased region" description="Basic and acidic residues" evidence="5">
    <location>
        <begin position="54"/>
        <end position="63"/>
    </location>
</feature>
<feature type="compositionally biased region" description="Basic and acidic residues" evidence="5">
    <location>
        <begin position="90"/>
        <end position="100"/>
    </location>
</feature>
<feature type="compositionally biased region" description="Polar residues" evidence="5">
    <location>
        <begin position="162"/>
        <end position="175"/>
    </location>
</feature>
<feature type="compositionally biased region" description="Basic and acidic residues" evidence="5">
    <location>
        <begin position="180"/>
        <end position="189"/>
    </location>
</feature>
<feature type="compositionally biased region" description="Basic and acidic residues" evidence="5">
    <location>
        <begin position="222"/>
        <end position="231"/>
    </location>
</feature>
<feature type="compositionally biased region" description="Polar residues" evidence="5">
    <location>
        <begin position="234"/>
        <end position="268"/>
    </location>
</feature>
<feature type="compositionally biased region" description="Basic and acidic residues" evidence="5">
    <location>
        <begin position="285"/>
        <end position="300"/>
    </location>
</feature>
<feature type="compositionally biased region" description="Basic and acidic residues" evidence="5">
    <location>
        <begin position="535"/>
        <end position="546"/>
    </location>
</feature>
<feature type="compositionally biased region" description="Basic and acidic residues" evidence="5">
    <location>
        <begin position="633"/>
        <end position="651"/>
    </location>
</feature>
<feature type="modified residue" description="Phosphoserine" evidence="8">
    <location>
        <position position="4"/>
    </location>
</feature>
<feature type="modified residue" description="Phosphoserine" evidence="8">
    <location>
        <position position="22"/>
    </location>
</feature>
<feature type="lipid moiety-binding region" description="S-palmitoyl cysteine" evidence="1">
    <location>
        <position position="36"/>
    </location>
</feature>
<feature type="lipid moiety-binding region" description="S-palmitoyl cysteine" evidence="1">
    <location>
        <position position="123"/>
    </location>
</feature>
<reference key="1">
    <citation type="journal article" date="2009" name="PLoS Biol.">
        <title>Lineage-specific biology revealed by a finished genome assembly of the mouse.</title>
        <authorList>
            <person name="Church D.M."/>
            <person name="Goodstadt L."/>
            <person name="Hillier L.W."/>
            <person name="Zody M.C."/>
            <person name="Goldstein S."/>
            <person name="She X."/>
            <person name="Bult C.J."/>
            <person name="Agarwala R."/>
            <person name="Cherry J.L."/>
            <person name="DiCuccio M."/>
            <person name="Hlavina W."/>
            <person name="Kapustin Y."/>
            <person name="Meric P."/>
            <person name="Maglott D."/>
            <person name="Birtle Z."/>
            <person name="Marques A.C."/>
            <person name="Graves T."/>
            <person name="Zhou S."/>
            <person name="Teague B."/>
            <person name="Potamousis K."/>
            <person name="Churas C."/>
            <person name="Place M."/>
            <person name="Herschleb J."/>
            <person name="Runnheim R."/>
            <person name="Forrest D."/>
            <person name="Amos-Landgraf J."/>
            <person name="Schwartz D.C."/>
            <person name="Cheng Z."/>
            <person name="Lindblad-Toh K."/>
            <person name="Eichler E.E."/>
            <person name="Ponting C.P."/>
        </authorList>
    </citation>
    <scope>NUCLEOTIDE SEQUENCE [LARGE SCALE GENOMIC DNA]</scope>
    <source>
        <strain>C57BL/6J</strain>
    </source>
</reference>
<reference key="2">
    <citation type="journal article" date="2010" name="Cell">
        <title>A tissue-specific atlas of mouse protein phosphorylation and expression.</title>
        <authorList>
            <person name="Huttlin E.L."/>
            <person name="Jedrychowski M.P."/>
            <person name="Elias J.E."/>
            <person name="Goswami T."/>
            <person name="Rad R."/>
            <person name="Beausoleil S.A."/>
            <person name="Villen J."/>
            <person name="Haas W."/>
            <person name="Sowa M.E."/>
            <person name="Gygi S.P."/>
        </authorList>
    </citation>
    <scope>PHOSPHORYLATION [LARGE SCALE ANALYSIS] AT SER-4 AND SER-22</scope>
    <scope>IDENTIFICATION BY MASS SPECTROMETRY [LARGE SCALE ANALYSIS]</scope>
    <source>
        <tissue>Brain</tissue>
        <tissue>Lung</tissue>
    </source>
</reference>
<reference key="3">
    <citation type="journal article" date="2006" name="EMBO J.">
        <title>AKAP150, a switch to convert mechano-, pH- and arachidonic acid-sensitive TREK K(+) channels into open leak channels.</title>
        <authorList>
            <person name="Sandoz G."/>
            <person name="Thuemmler S."/>
            <person name="Duprat F."/>
            <person name="Feliciangeli S."/>
            <person name="Vinh J."/>
            <person name="Escoubas P."/>
            <person name="Guy N."/>
            <person name="Lazdunski M."/>
            <person name="Lesage F."/>
        </authorList>
    </citation>
    <scope>FUNCTION</scope>
    <scope>INTERACTION WITH KCNK2</scope>
    <scope>SUBCELLULAR LOCATION</scope>
    <scope>SUBUNIT</scope>
</reference>